<protein>
    <recommendedName>
        <fullName evidence="1">Imidazolonepropionase</fullName>
        <ecNumber evidence="1">3.5.2.7</ecNumber>
    </recommendedName>
    <alternativeName>
        <fullName evidence="1">Imidazolone-5-propionate hydrolase</fullName>
    </alternativeName>
</protein>
<gene>
    <name evidence="1" type="primary">hutI</name>
    <name type="ordered locus">Kole_1719</name>
</gene>
<organism>
    <name type="scientific">Kosmotoga olearia (strain ATCC BAA-1733 / DSM 21960 / TBF 19.5.1)</name>
    <dbReference type="NCBI Taxonomy" id="521045"/>
    <lineage>
        <taxon>Bacteria</taxon>
        <taxon>Thermotogati</taxon>
        <taxon>Thermotogota</taxon>
        <taxon>Thermotogae</taxon>
        <taxon>Kosmotogales</taxon>
        <taxon>Kosmotogaceae</taxon>
        <taxon>Kosmotoga</taxon>
    </lineage>
</organism>
<evidence type="ECO:0000255" key="1">
    <source>
        <dbReference type="HAMAP-Rule" id="MF_00372"/>
    </source>
</evidence>
<sequence length="406" mass="44498">MRVDLTITNLSEIVSPKGKPPVCGKNMSQLSIRKNKNIAIKDGKIVYIGSEIPPALRTINANGAIALPGLVDPHTHIPFTGNRAHEFIMRLHGKSYMEIMQAGGGILSTVKAVRKASLKELVLRGAYALNEMLKLGVTTVEGKSGYGLEKTAEIKQLKALKLLNKVQLVDVIPTFLGAHALPEEFEDKKEYLNYLSNMLKDVREYTDTVDIFCEKGVFEVEESREFLERAKAMGFRLRLHADELAPSGAGKLAVELGAVSADHLISADDETLEAISKSATTAVILPGTSFFLKERFARGRKMIDLGSAVALASDFNPGSCNIYDPYLIMHLAVTRCGLEIEEAVTAYTINAAHILNLSNRKGKIEEGYDADIVLLGLNSYTEIPYMFSRITVVSVIKSGRVVFHES</sequence>
<feature type="chain" id="PRO_1000205584" description="Imidazolonepropionase">
    <location>
        <begin position="1"/>
        <end position="406"/>
    </location>
</feature>
<feature type="binding site" evidence="1">
    <location>
        <position position="74"/>
    </location>
    <ligand>
        <name>Fe(3+)</name>
        <dbReference type="ChEBI" id="CHEBI:29034"/>
    </ligand>
</feature>
<feature type="binding site" evidence="1">
    <location>
        <position position="74"/>
    </location>
    <ligand>
        <name>Zn(2+)</name>
        <dbReference type="ChEBI" id="CHEBI:29105"/>
    </ligand>
</feature>
<feature type="binding site" evidence="1">
    <location>
        <position position="76"/>
    </location>
    <ligand>
        <name>Fe(3+)</name>
        <dbReference type="ChEBI" id="CHEBI:29034"/>
    </ligand>
</feature>
<feature type="binding site" evidence="1">
    <location>
        <position position="76"/>
    </location>
    <ligand>
        <name>Zn(2+)</name>
        <dbReference type="ChEBI" id="CHEBI:29105"/>
    </ligand>
</feature>
<feature type="binding site" evidence="1">
    <location>
        <position position="83"/>
    </location>
    <ligand>
        <name>4-imidazolone-5-propanoate</name>
        <dbReference type="ChEBI" id="CHEBI:77893"/>
    </ligand>
</feature>
<feature type="binding site" evidence="1">
    <location>
        <position position="146"/>
    </location>
    <ligand>
        <name>4-imidazolone-5-propanoate</name>
        <dbReference type="ChEBI" id="CHEBI:77893"/>
    </ligand>
</feature>
<feature type="binding site" evidence="1">
    <location>
        <position position="146"/>
    </location>
    <ligand>
        <name>N-formimidoyl-L-glutamate</name>
        <dbReference type="ChEBI" id="CHEBI:58928"/>
    </ligand>
</feature>
<feature type="binding site" evidence="1">
    <location>
        <position position="179"/>
    </location>
    <ligand>
        <name>4-imidazolone-5-propanoate</name>
        <dbReference type="ChEBI" id="CHEBI:77893"/>
    </ligand>
</feature>
<feature type="binding site" evidence="1">
    <location>
        <position position="240"/>
    </location>
    <ligand>
        <name>Fe(3+)</name>
        <dbReference type="ChEBI" id="CHEBI:29034"/>
    </ligand>
</feature>
<feature type="binding site" evidence="1">
    <location>
        <position position="240"/>
    </location>
    <ligand>
        <name>Zn(2+)</name>
        <dbReference type="ChEBI" id="CHEBI:29105"/>
    </ligand>
</feature>
<feature type="binding site" evidence="1">
    <location>
        <position position="243"/>
    </location>
    <ligand>
        <name>4-imidazolone-5-propanoate</name>
        <dbReference type="ChEBI" id="CHEBI:77893"/>
    </ligand>
</feature>
<feature type="binding site" evidence="1">
    <location>
        <position position="314"/>
    </location>
    <ligand>
        <name>Fe(3+)</name>
        <dbReference type="ChEBI" id="CHEBI:29034"/>
    </ligand>
</feature>
<feature type="binding site" evidence="1">
    <location>
        <position position="314"/>
    </location>
    <ligand>
        <name>Zn(2+)</name>
        <dbReference type="ChEBI" id="CHEBI:29105"/>
    </ligand>
</feature>
<feature type="binding site" evidence="1">
    <location>
        <position position="316"/>
    </location>
    <ligand>
        <name>N-formimidoyl-L-glutamate</name>
        <dbReference type="ChEBI" id="CHEBI:58928"/>
    </ligand>
</feature>
<feature type="binding site" evidence="1">
    <location>
        <position position="318"/>
    </location>
    <ligand>
        <name>N-formimidoyl-L-glutamate</name>
        <dbReference type="ChEBI" id="CHEBI:58928"/>
    </ligand>
</feature>
<feature type="binding site" evidence="1">
    <location>
        <position position="319"/>
    </location>
    <ligand>
        <name>4-imidazolone-5-propanoate</name>
        <dbReference type="ChEBI" id="CHEBI:77893"/>
    </ligand>
</feature>
<name>HUTI_KOSOT</name>
<comment type="function">
    <text evidence="1">Catalyzes the hydrolytic cleavage of the carbon-nitrogen bond in imidazolone-5-propanoate to yield N-formimidoyl-L-glutamate. It is the third step in the universal histidine degradation pathway.</text>
</comment>
<comment type="catalytic activity">
    <reaction evidence="1">
        <text>4-imidazolone-5-propanoate + H2O = N-formimidoyl-L-glutamate</text>
        <dbReference type="Rhea" id="RHEA:23660"/>
        <dbReference type="ChEBI" id="CHEBI:15377"/>
        <dbReference type="ChEBI" id="CHEBI:58928"/>
        <dbReference type="ChEBI" id="CHEBI:77893"/>
        <dbReference type="EC" id="3.5.2.7"/>
    </reaction>
</comment>
<comment type="cofactor">
    <cofactor evidence="1">
        <name>Zn(2+)</name>
        <dbReference type="ChEBI" id="CHEBI:29105"/>
    </cofactor>
    <cofactor evidence="1">
        <name>Fe(3+)</name>
        <dbReference type="ChEBI" id="CHEBI:29034"/>
    </cofactor>
    <text evidence="1">Binds 1 zinc or iron ion per subunit.</text>
</comment>
<comment type="pathway">
    <text evidence="1">Amino-acid degradation; L-histidine degradation into L-glutamate; N-formimidoyl-L-glutamate from L-histidine: step 3/3.</text>
</comment>
<comment type="subcellular location">
    <subcellularLocation>
        <location evidence="1">Cytoplasm</location>
    </subcellularLocation>
</comment>
<comment type="similarity">
    <text evidence="1">Belongs to the metallo-dependent hydrolases superfamily. HutI family.</text>
</comment>
<accession>C5CFQ7</accession>
<keyword id="KW-0963">Cytoplasm</keyword>
<keyword id="KW-0369">Histidine metabolism</keyword>
<keyword id="KW-0378">Hydrolase</keyword>
<keyword id="KW-0408">Iron</keyword>
<keyword id="KW-0479">Metal-binding</keyword>
<keyword id="KW-1185">Reference proteome</keyword>
<keyword id="KW-0862">Zinc</keyword>
<proteinExistence type="inferred from homology"/>
<dbReference type="EC" id="3.5.2.7" evidence="1"/>
<dbReference type="EMBL" id="CP001634">
    <property type="protein sequence ID" value="ACR80405.1"/>
    <property type="molecule type" value="Genomic_DNA"/>
</dbReference>
<dbReference type="SMR" id="C5CFQ7"/>
<dbReference type="STRING" id="521045.Kole_1719"/>
<dbReference type="KEGG" id="kol:Kole_1719"/>
<dbReference type="eggNOG" id="COG1228">
    <property type="taxonomic scope" value="Bacteria"/>
</dbReference>
<dbReference type="HOGENOM" id="CLU_041647_0_1_0"/>
<dbReference type="UniPathway" id="UPA00379">
    <property type="reaction ID" value="UER00551"/>
</dbReference>
<dbReference type="Proteomes" id="UP000002382">
    <property type="component" value="Chromosome"/>
</dbReference>
<dbReference type="GO" id="GO:0005737">
    <property type="term" value="C:cytoplasm"/>
    <property type="evidence" value="ECO:0007669"/>
    <property type="project" value="UniProtKB-SubCell"/>
</dbReference>
<dbReference type="GO" id="GO:0050480">
    <property type="term" value="F:imidazolonepropionase activity"/>
    <property type="evidence" value="ECO:0007669"/>
    <property type="project" value="UniProtKB-UniRule"/>
</dbReference>
<dbReference type="GO" id="GO:0005506">
    <property type="term" value="F:iron ion binding"/>
    <property type="evidence" value="ECO:0007669"/>
    <property type="project" value="UniProtKB-UniRule"/>
</dbReference>
<dbReference type="GO" id="GO:0008270">
    <property type="term" value="F:zinc ion binding"/>
    <property type="evidence" value="ECO:0007669"/>
    <property type="project" value="UniProtKB-UniRule"/>
</dbReference>
<dbReference type="GO" id="GO:0019556">
    <property type="term" value="P:L-histidine catabolic process to glutamate and formamide"/>
    <property type="evidence" value="ECO:0007669"/>
    <property type="project" value="UniProtKB-UniPathway"/>
</dbReference>
<dbReference type="GO" id="GO:0019557">
    <property type="term" value="P:L-histidine catabolic process to glutamate and formate"/>
    <property type="evidence" value="ECO:0007669"/>
    <property type="project" value="UniProtKB-UniPathway"/>
</dbReference>
<dbReference type="FunFam" id="3.20.20.140:FF:000007">
    <property type="entry name" value="Imidazolonepropionase"/>
    <property type="match status" value="1"/>
</dbReference>
<dbReference type="Gene3D" id="3.20.20.140">
    <property type="entry name" value="Metal-dependent hydrolases"/>
    <property type="match status" value="1"/>
</dbReference>
<dbReference type="Gene3D" id="2.30.40.10">
    <property type="entry name" value="Urease, subunit C, domain 1"/>
    <property type="match status" value="1"/>
</dbReference>
<dbReference type="HAMAP" id="MF_00372">
    <property type="entry name" value="HutI"/>
    <property type="match status" value="1"/>
</dbReference>
<dbReference type="InterPro" id="IPR006680">
    <property type="entry name" value="Amidohydro-rel"/>
</dbReference>
<dbReference type="InterPro" id="IPR005920">
    <property type="entry name" value="HutI"/>
</dbReference>
<dbReference type="InterPro" id="IPR011059">
    <property type="entry name" value="Metal-dep_hydrolase_composite"/>
</dbReference>
<dbReference type="InterPro" id="IPR032466">
    <property type="entry name" value="Metal_Hydrolase"/>
</dbReference>
<dbReference type="NCBIfam" id="TIGR01224">
    <property type="entry name" value="hutI"/>
    <property type="match status" value="1"/>
</dbReference>
<dbReference type="PANTHER" id="PTHR42752">
    <property type="entry name" value="IMIDAZOLONEPROPIONASE"/>
    <property type="match status" value="1"/>
</dbReference>
<dbReference type="PANTHER" id="PTHR42752:SF1">
    <property type="entry name" value="IMIDAZOLONEPROPIONASE-RELATED"/>
    <property type="match status" value="1"/>
</dbReference>
<dbReference type="Pfam" id="PF01979">
    <property type="entry name" value="Amidohydro_1"/>
    <property type="match status" value="1"/>
</dbReference>
<dbReference type="SUPFAM" id="SSF51338">
    <property type="entry name" value="Composite domain of metallo-dependent hydrolases"/>
    <property type="match status" value="1"/>
</dbReference>
<dbReference type="SUPFAM" id="SSF51556">
    <property type="entry name" value="Metallo-dependent hydrolases"/>
    <property type="match status" value="1"/>
</dbReference>
<reference key="1">
    <citation type="submission" date="2009-06" db="EMBL/GenBank/DDBJ databases">
        <title>Complete sequence of Thermotogales bacterium TBF 19.5.1.</title>
        <authorList>
            <consortium name="US DOE Joint Genome Institute"/>
            <person name="Lucas S."/>
            <person name="Copeland A."/>
            <person name="Lapidus A."/>
            <person name="Glavina del Rio T."/>
            <person name="Tice H."/>
            <person name="Bruce D."/>
            <person name="Goodwin L."/>
            <person name="Pitluck S."/>
            <person name="Chertkov O."/>
            <person name="Brettin T."/>
            <person name="Detter J.C."/>
            <person name="Han C."/>
            <person name="Schmutz J."/>
            <person name="Larimer F."/>
            <person name="Land M."/>
            <person name="Hauser L."/>
            <person name="Kyrpides N."/>
            <person name="Ovchinnikova G."/>
            <person name="Noll K."/>
        </authorList>
    </citation>
    <scope>NUCLEOTIDE SEQUENCE [LARGE SCALE GENOMIC DNA]</scope>
    <source>
        <strain>ATCC BAA-1733 / DSM 21960 / TBF 19.5.1</strain>
    </source>
</reference>